<name>P2RY2_MOUSE</name>
<accession>P35383</accession>
<accession>O09031</accession>
<accession>Q9CPZ4</accession>
<protein>
    <recommendedName>
        <fullName>P2Y purinoceptor 2</fullName>
        <shortName>P2Y2</shortName>
    </recommendedName>
    <alternativeName>
        <fullName>ATP receptor</fullName>
    </alternativeName>
    <alternativeName>
        <fullName>P2U purinoceptor 1</fullName>
        <shortName>P2U1</shortName>
    </alternativeName>
    <alternativeName>
        <fullName>Purinergic receptor</fullName>
    </alternativeName>
</protein>
<sequence length="373" mass="42175">MAADLEPWNSTINGTWEGDELGYKCRFNEDFKYVLLPVSYGVVCVLGLCLNVVALYIFLCRLKTWNASTTYMFHLAVSDSLYAASLPLLVYYYARGDHWPFSTVLCKLVRFLFYTNLYCSILFLTCISVHRCLGVLRPLHSLRWGRARYARRVAAVVWVLVLACQAPVLYFVTTSVRGTRITCHDTSARELFSHFVAYSSVMLGLLFAVPFSVILVCYVLMARRLLKPAYGTTGGLPRAKRKSVRTIALVLAVFALCFLPFHVTRTLYYSFRSLDLSCHTLNAINMAYKITRPLASANSCLDPVLYFLAGQRLVRFARDAKPPTEPTPSPQARRKLGLHRPNRTVRKDLSVSSDDSRRTESTPAGSETKDIRL</sequence>
<feature type="chain" id="PRO_0000070015" description="P2Y purinoceptor 2">
    <location>
        <begin position="1"/>
        <end position="373"/>
    </location>
</feature>
<feature type="topological domain" description="Extracellular" evidence="1">
    <location>
        <begin position="1"/>
        <end position="32"/>
    </location>
</feature>
<feature type="transmembrane region" description="Helical; Name=1" evidence="1">
    <location>
        <begin position="33"/>
        <end position="59"/>
    </location>
</feature>
<feature type="topological domain" description="Cytoplasmic" evidence="1">
    <location>
        <begin position="60"/>
        <end position="70"/>
    </location>
</feature>
<feature type="transmembrane region" description="Helical; Name=2" evidence="1">
    <location>
        <begin position="71"/>
        <end position="93"/>
    </location>
</feature>
<feature type="topological domain" description="Extracellular" evidence="1">
    <location>
        <begin position="94"/>
        <end position="110"/>
    </location>
</feature>
<feature type="transmembrane region" description="Helical; Name=3" evidence="1">
    <location>
        <begin position="111"/>
        <end position="129"/>
    </location>
</feature>
<feature type="topological domain" description="Cytoplasmic" evidence="1">
    <location>
        <begin position="130"/>
        <end position="152"/>
    </location>
</feature>
<feature type="transmembrane region" description="Helical; Name=4" evidence="1">
    <location>
        <begin position="153"/>
        <end position="172"/>
    </location>
</feature>
<feature type="topological domain" description="Extracellular" evidence="1">
    <location>
        <begin position="173"/>
        <end position="194"/>
    </location>
</feature>
<feature type="transmembrane region" description="Helical; Name=5" evidence="1">
    <location>
        <begin position="195"/>
        <end position="220"/>
    </location>
</feature>
<feature type="topological domain" description="Cytoplasmic" evidence="1">
    <location>
        <begin position="221"/>
        <end position="246"/>
    </location>
</feature>
<feature type="transmembrane region" description="Helical; Name=6" evidence="1">
    <location>
        <begin position="247"/>
        <end position="269"/>
    </location>
</feature>
<feature type="topological domain" description="Extracellular" evidence="1">
    <location>
        <begin position="270"/>
        <end position="287"/>
    </location>
</feature>
<feature type="transmembrane region" description="Helical; Name=7" evidence="1">
    <location>
        <begin position="288"/>
        <end position="309"/>
    </location>
</feature>
<feature type="topological domain" description="Cytoplasmic" evidence="1">
    <location>
        <begin position="310"/>
        <end position="373"/>
    </location>
</feature>
<feature type="region of interest" description="Disordered" evidence="3">
    <location>
        <begin position="318"/>
        <end position="373"/>
    </location>
</feature>
<feature type="compositionally biased region" description="Basic residues" evidence="3">
    <location>
        <begin position="332"/>
        <end position="344"/>
    </location>
</feature>
<feature type="compositionally biased region" description="Basic and acidic residues" evidence="3">
    <location>
        <begin position="345"/>
        <end position="360"/>
    </location>
</feature>
<feature type="glycosylation site" description="N-linked (GlcNAc...) asparagine" evidence="1">
    <location>
        <position position="9"/>
    </location>
</feature>
<feature type="glycosylation site" description="N-linked (GlcNAc...) asparagine" evidence="1">
    <location>
        <position position="13"/>
    </location>
</feature>
<feature type="disulfide bond" evidence="2">
    <location>
        <begin position="106"/>
        <end position="183"/>
    </location>
</feature>
<feature type="mutagenesis site" description="No effect on receptor activation." evidence="4">
    <original>K</original>
    <variation>I</variation>
    <location>
        <position position="107"/>
    </location>
</feature>
<feature type="mutagenesis site" description="No effect on receptor activation." evidence="4">
    <original>R</original>
    <variation>L</variation>
    <location>
        <position position="110"/>
    </location>
</feature>
<feature type="mutagenesis site" description="Decrease in receptor activation." evidence="4">
    <original>H</original>
    <variation>L</variation>
    <location>
        <position position="262"/>
    </location>
</feature>
<feature type="mutagenesis site" description="Decrease in receptor activation." evidence="4">
    <original>R</original>
    <variation>L</variation>
    <location>
        <position position="265"/>
    </location>
</feature>
<feature type="mutagenesis site" description="No effect on receptor activation." evidence="4">
    <original>K</original>
    <variation>I</variation>
    <location>
        <position position="289"/>
    </location>
</feature>
<feature type="mutagenesis site" description="Decrease in receptor activation." evidence="4">
    <original>R</original>
    <variation>L</variation>
    <location>
        <position position="292"/>
    </location>
</feature>
<feature type="sequence conflict" description="In Ref. 2; AAB50735." evidence="5" ref="2">
    <original>E</original>
    <variation>D</variation>
    <location>
        <position position="17"/>
    </location>
</feature>
<feature type="sequence conflict" description="In Ref. 2; AAB50735." evidence="5" ref="2">
    <original>S</original>
    <variation>R</variation>
    <location>
        <position position="120"/>
    </location>
</feature>
<feature type="sequence conflict" description="In Ref. 2; AAB50735." evidence="5" ref="2">
    <original>T</original>
    <variation>N</variation>
    <location>
        <position position="125"/>
    </location>
</feature>
<feature type="sequence conflict" description="In Ref. 2; AAB50735." evidence="5" ref="2">
    <original>V</original>
    <variation>M</variation>
    <location>
        <position position="196"/>
    </location>
</feature>
<feature type="sequence conflict" description="In Ref. 3; BAB23746/BAB30719." evidence="5" ref="3">
    <original>V</original>
    <variation>L</variation>
    <location>
        <position position="263"/>
    </location>
</feature>
<feature type="sequence conflict" description="In Ref. 2; AAB50735." evidence="5" ref="2">
    <original>D</original>
    <variation>N</variation>
    <location>
        <position position="355"/>
    </location>
</feature>
<feature type="sequence conflict" description="In Ref. 2; AAB50735." evidence="5" ref="2">
    <original>KDI</original>
    <variation>PYV</variation>
    <location>
        <begin position="369"/>
        <end position="371"/>
    </location>
</feature>
<keyword id="KW-1003">Cell membrane</keyword>
<keyword id="KW-1015">Disulfide bond</keyword>
<keyword id="KW-0297">G-protein coupled receptor</keyword>
<keyword id="KW-0325">Glycoprotein</keyword>
<keyword id="KW-0472">Membrane</keyword>
<keyword id="KW-0675">Receptor</keyword>
<keyword id="KW-1185">Reference proteome</keyword>
<keyword id="KW-0807">Transducer</keyword>
<keyword id="KW-0812">Transmembrane</keyword>
<keyword id="KW-1133">Transmembrane helix</keyword>
<gene>
    <name type="primary">P2ry2</name>
    <name type="synonym">P2ru1</name>
</gene>
<organism>
    <name type="scientific">Mus musculus</name>
    <name type="common">Mouse</name>
    <dbReference type="NCBI Taxonomy" id="10090"/>
    <lineage>
        <taxon>Eukaryota</taxon>
        <taxon>Metazoa</taxon>
        <taxon>Chordata</taxon>
        <taxon>Craniata</taxon>
        <taxon>Vertebrata</taxon>
        <taxon>Euteleostomi</taxon>
        <taxon>Mammalia</taxon>
        <taxon>Eutheria</taxon>
        <taxon>Euarchontoglires</taxon>
        <taxon>Glires</taxon>
        <taxon>Rodentia</taxon>
        <taxon>Myomorpha</taxon>
        <taxon>Muroidea</taxon>
        <taxon>Muridae</taxon>
        <taxon>Murinae</taxon>
        <taxon>Mus</taxon>
        <taxon>Mus</taxon>
    </lineage>
</organism>
<proteinExistence type="evidence at protein level"/>
<dbReference type="EMBL" id="L14751">
    <property type="protein sequence ID" value="AAA39871.1"/>
    <property type="molecule type" value="mRNA"/>
</dbReference>
<dbReference type="EMBL" id="S83099">
    <property type="protein sequence ID" value="AAB50735.1"/>
    <property type="molecule type" value="mRNA"/>
</dbReference>
<dbReference type="EMBL" id="AK005013">
    <property type="protein sequence ID" value="BAB23746.1"/>
    <property type="molecule type" value="mRNA"/>
</dbReference>
<dbReference type="EMBL" id="AK017378">
    <property type="protein sequence ID" value="BAB30719.1"/>
    <property type="molecule type" value="mRNA"/>
</dbReference>
<dbReference type="EMBL" id="BC006613">
    <property type="protein sequence ID" value="AAH06613.1"/>
    <property type="molecule type" value="mRNA"/>
</dbReference>
<dbReference type="CCDS" id="CCDS21508.1"/>
<dbReference type="PIR" id="A47556">
    <property type="entry name" value="A47556"/>
</dbReference>
<dbReference type="RefSeq" id="NP_001289275.1">
    <property type="nucleotide sequence ID" value="NM_001302346.1"/>
</dbReference>
<dbReference type="RefSeq" id="NP_001289276.1">
    <property type="nucleotide sequence ID" value="NM_001302347.1"/>
</dbReference>
<dbReference type="RefSeq" id="NP_032799.2">
    <property type="nucleotide sequence ID" value="NM_008773.4"/>
</dbReference>
<dbReference type="SMR" id="P35383"/>
<dbReference type="CORUM" id="P35383"/>
<dbReference type="FunCoup" id="P35383">
    <property type="interactions" value="479"/>
</dbReference>
<dbReference type="STRING" id="10090.ENSMUSP00000036765"/>
<dbReference type="BindingDB" id="P35383"/>
<dbReference type="ChEMBL" id="CHEMBL1075298"/>
<dbReference type="GlyCosmos" id="P35383">
    <property type="glycosylation" value="2 sites, No reported glycans"/>
</dbReference>
<dbReference type="GlyGen" id="P35383">
    <property type="glycosylation" value="3 sites"/>
</dbReference>
<dbReference type="iPTMnet" id="P35383"/>
<dbReference type="PhosphoSitePlus" id="P35383"/>
<dbReference type="PaxDb" id="10090-ENSMUSP00000036765"/>
<dbReference type="ProteomicsDB" id="294417"/>
<dbReference type="DNASU" id="18442"/>
<dbReference type="GeneID" id="18442"/>
<dbReference type="KEGG" id="mmu:18442"/>
<dbReference type="UCSC" id="uc009iny.2">
    <property type="organism name" value="mouse"/>
</dbReference>
<dbReference type="AGR" id="MGI:105107"/>
<dbReference type="CTD" id="5029"/>
<dbReference type="MGI" id="MGI:105107">
    <property type="gene designation" value="P2ry2"/>
</dbReference>
<dbReference type="eggNOG" id="ENOG502QSTF">
    <property type="taxonomic scope" value="Eukaryota"/>
</dbReference>
<dbReference type="InParanoid" id="P35383"/>
<dbReference type="OrthoDB" id="10018446at2759"/>
<dbReference type="PhylomeDB" id="P35383"/>
<dbReference type="TreeFam" id="TF350009"/>
<dbReference type="Reactome" id="R-MMU-416476">
    <property type="pathway name" value="G alpha (q) signalling events"/>
</dbReference>
<dbReference type="Reactome" id="R-MMU-417957">
    <property type="pathway name" value="P2Y receptors"/>
</dbReference>
<dbReference type="Reactome" id="R-MMU-5683826">
    <property type="pathway name" value="Surfactant metabolism"/>
</dbReference>
<dbReference type="Reactome" id="R-MMU-9856530">
    <property type="pathway name" value="High laminar flow shear stress activates signaling by PIEZO1 and PECAM1:CDH5:KDR in endothelial cells"/>
</dbReference>
<dbReference type="BioGRID-ORCS" id="18442">
    <property type="hits" value="1 hit in 78 CRISPR screens"/>
</dbReference>
<dbReference type="ChiTaRS" id="P2ry2">
    <property type="organism name" value="mouse"/>
</dbReference>
<dbReference type="PRO" id="PR:P35383"/>
<dbReference type="Proteomes" id="UP000000589">
    <property type="component" value="Unplaced"/>
</dbReference>
<dbReference type="RNAct" id="P35383">
    <property type="molecule type" value="protein"/>
</dbReference>
<dbReference type="GO" id="GO:0005886">
    <property type="term" value="C:plasma membrane"/>
    <property type="evidence" value="ECO:0007669"/>
    <property type="project" value="UniProtKB-SubCell"/>
</dbReference>
<dbReference type="GO" id="GO:0045028">
    <property type="term" value="F:G protein-coupled purinergic nucleotide receptor activity"/>
    <property type="evidence" value="ECO:0007669"/>
    <property type="project" value="InterPro"/>
</dbReference>
<dbReference type="GO" id="GO:0097746">
    <property type="term" value="P:blood vessel diameter maintenance"/>
    <property type="evidence" value="ECO:0007669"/>
    <property type="project" value="InterPro"/>
</dbReference>
<dbReference type="GO" id="GO:0051649">
    <property type="term" value="P:establishment of localization in cell"/>
    <property type="evidence" value="ECO:0000315"/>
    <property type="project" value="MGI"/>
</dbReference>
<dbReference type="GO" id="GO:0070254">
    <property type="term" value="P:mucus secretion"/>
    <property type="evidence" value="ECO:0000315"/>
    <property type="project" value="MGI"/>
</dbReference>
<dbReference type="GO" id="GO:0007200">
    <property type="term" value="P:phospholipase C-activating G protein-coupled receptor signaling pathway"/>
    <property type="evidence" value="ECO:0007669"/>
    <property type="project" value="InterPro"/>
</dbReference>
<dbReference type="GO" id="GO:0070257">
    <property type="term" value="P:positive regulation of mucus secretion"/>
    <property type="evidence" value="ECO:0000315"/>
    <property type="project" value="MGI"/>
</dbReference>
<dbReference type="CDD" id="cd15373">
    <property type="entry name" value="7tmA_P2Y2"/>
    <property type="match status" value="1"/>
</dbReference>
<dbReference type="FunFam" id="1.20.1070.10:FF:000017">
    <property type="entry name" value="lysophosphatidic acid receptor 4"/>
    <property type="match status" value="1"/>
</dbReference>
<dbReference type="Gene3D" id="1.20.1070.10">
    <property type="entry name" value="Rhodopsin 7-helix transmembrane proteins"/>
    <property type="match status" value="1"/>
</dbReference>
<dbReference type="InterPro" id="IPR000276">
    <property type="entry name" value="GPCR_Rhodpsn"/>
</dbReference>
<dbReference type="InterPro" id="IPR017452">
    <property type="entry name" value="GPCR_Rhodpsn_7TM"/>
</dbReference>
<dbReference type="InterPro" id="IPR000356">
    <property type="entry name" value="P2Y2_rcpt"/>
</dbReference>
<dbReference type="PANTHER" id="PTHR24231:SF17">
    <property type="entry name" value="P2Y PURINOCEPTOR 2"/>
    <property type="match status" value="1"/>
</dbReference>
<dbReference type="PANTHER" id="PTHR24231">
    <property type="entry name" value="PURINOCEPTOR-RELATED G-PROTEIN COUPLED RECEPTOR"/>
    <property type="match status" value="1"/>
</dbReference>
<dbReference type="Pfam" id="PF00001">
    <property type="entry name" value="7tm_1"/>
    <property type="match status" value="1"/>
</dbReference>
<dbReference type="PRINTS" id="PR00237">
    <property type="entry name" value="GPCRRHODOPSN"/>
</dbReference>
<dbReference type="PRINTS" id="PR00594">
    <property type="entry name" value="P2Y2PRNOCPTR"/>
</dbReference>
<dbReference type="PRINTS" id="PR01157">
    <property type="entry name" value="P2YPURNOCPTR"/>
</dbReference>
<dbReference type="SUPFAM" id="SSF81321">
    <property type="entry name" value="Family A G protein-coupled receptor-like"/>
    <property type="match status" value="1"/>
</dbReference>
<dbReference type="PROSITE" id="PS00237">
    <property type="entry name" value="G_PROTEIN_RECEP_F1_1"/>
    <property type="match status" value="1"/>
</dbReference>
<dbReference type="PROSITE" id="PS50262">
    <property type="entry name" value="G_PROTEIN_RECEP_F1_2"/>
    <property type="match status" value="1"/>
</dbReference>
<comment type="function">
    <text>Receptor for ATP and UTP coupled to G-proteins that activate a phosphatidylinositol-calcium second messenger system. The affinity range is UTP = ATP &gt; ATP-gamma-S &gt;&gt; 2-methylthio-ATP = ADP.</text>
</comment>
<comment type="subcellular location">
    <subcellularLocation>
        <location>Cell membrane</location>
        <topology>Multi-pass membrane protein</topology>
    </subcellularLocation>
</comment>
<comment type="tissue specificity">
    <text>Spleen, testis, kidney, liver, lung, heart and brain.</text>
</comment>
<comment type="similarity">
    <text evidence="2">Belongs to the G-protein coupled receptor 1 family.</text>
</comment>
<evidence type="ECO:0000255" key="1"/>
<evidence type="ECO:0000255" key="2">
    <source>
        <dbReference type="PROSITE-ProRule" id="PRU00521"/>
    </source>
</evidence>
<evidence type="ECO:0000256" key="3">
    <source>
        <dbReference type="SAM" id="MobiDB-lite"/>
    </source>
</evidence>
<evidence type="ECO:0000269" key="4">
    <source>
    </source>
</evidence>
<evidence type="ECO:0000305" key="5"/>
<reference key="1">
    <citation type="journal article" date="1993" name="Proc. Natl. Acad. Sci. U.S.A.">
        <title>Expression cloning of an ATP receptor from mouse neuroblastoma cells.</title>
        <authorList>
            <person name="Lustig K.D."/>
            <person name="Shiau A.K."/>
            <person name="Brake A.J."/>
            <person name="Julius D."/>
        </authorList>
    </citation>
    <scope>NUCLEOTIDE SEQUENCE [MRNA]</scope>
</reference>
<reference key="2">
    <citation type="journal article" date="1996" name="Biol. Signals">
        <title>Expression cloning and signal transduction pathway of P2U receptor in mammary tumor cells.</title>
        <authorList>
            <person name="Enomoto K."/>
            <person name="Furuya K."/>
            <person name="Moore R.C."/>
            <person name="Yamagishi S."/>
            <person name="Oka T."/>
            <person name="Maeno T."/>
        </authorList>
    </citation>
    <scope>NUCLEOTIDE SEQUENCE [MRNA]</scope>
</reference>
<reference key="3">
    <citation type="journal article" date="2005" name="Science">
        <title>The transcriptional landscape of the mammalian genome.</title>
        <authorList>
            <person name="Carninci P."/>
            <person name="Kasukawa T."/>
            <person name="Katayama S."/>
            <person name="Gough J."/>
            <person name="Frith M.C."/>
            <person name="Maeda N."/>
            <person name="Oyama R."/>
            <person name="Ravasi T."/>
            <person name="Lenhard B."/>
            <person name="Wells C."/>
            <person name="Kodzius R."/>
            <person name="Shimokawa K."/>
            <person name="Bajic V.B."/>
            <person name="Brenner S.E."/>
            <person name="Batalov S."/>
            <person name="Forrest A.R."/>
            <person name="Zavolan M."/>
            <person name="Davis M.J."/>
            <person name="Wilming L.G."/>
            <person name="Aidinis V."/>
            <person name="Allen J.E."/>
            <person name="Ambesi-Impiombato A."/>
            <person name="Apweiler R."/>
            <person name="Aturaliya R.N."/>
            <person name="Bailey T.L."/>
            <person name="Bansal M."/>
            <person name="Baxter L."/>
            <person name="Beisel K.W."/>
            <person name="Bersano T."/>
            <person name="Bono H."/>
            <person name="Chalk A.M."/>
            <person name="Chiu K.P."/>
            <person name="Choudhary V."/>
            <person name="Christoffels A."/>
            <person name="Clutterbuck D.R."/>
            <person name="Crowe M.L."/>
            <person name="Dalla E."/>
            <person name="Dalrymple B.P."/>
            <person name="de Bono B."/>
            <person name="Della Gatta G."/>
            <person name="di Bernardo D."/>
            <person name="Down T."/>
            <person name="Engstrom P."/>
            <person name="Fagiolini M."/>
            <person name="Faulkner G."/>
            <person name="Fletcher C.F."/>
            <person name="Fukushima T."/>
            <person name="Furuno M."/>
            <person name="Futaki S."/>
            <person name="Gariboldi M."/>
            <person name="Georgii-Hemming P."/>
            <person name="Gingeras T.R."/>
            <person name="Gojobori T."/>
            <person name="Green R.E."/>
            <person name="Gustincich S."/>
            <person name="Harbers M."/>
            <person name="Hayashi Y."/>
            <person name="Hensch T.K."/>
            <person name="Hirokawa N."/>
            <person name="Hill D."/>
            <person name="Huminiecki L."/>
            <person name="Iacono M."/>
            <person name="Ikeo K."/>
            <person name="Iwama A."/>
            <person name="Ishikawa T."/>
            <person name="Jakt M."/>
            <person name="Kanapin A."/>
            <person name="Katoh M."/>
            <person name="Kawasawa Y."/>
            <person name="Kelso J."/>
            <person name="Kitamura H."/>
            <person name="Kitano H."/>
            <person name="Kollias G."/>
            <person name="Krishnan S.P."/>
            <person name="Kruger A."/>
            <person name="Kummerfeld S.K."/>
            <person name="Kurochkin I.V."/>
            <person name="Lareau L.F."/>
            <person name="Lazarevic D."/>
            <person name="Lipovich L."/>
            <person name="Liu J."/>
            <person name="Liuni S."/>
            <person name="McWilliam S."/>
            <person name="Madan Babu M."/>
            <person name="Madera M."/>
            <person name="Marchionni L."/>
            <person name="Matsuda H."/>
            <person name="Matsuzawa S."/>
            <person name="Miki H."/>
            <person name="Mignone F."/>
            <person name="Miyake S."/>
            <person name="Morris K."/>
            <person name="Mottagui-Tabar S."/>
            <person name="Mulder N."/>
            <person name="Nakano N."/>
            <person name="Nakauchi H."/>
            <person name="Ng P."/>
            <person name="Nilsson R."/>
            <person name="Nishiguchi S."/>
            <person name="Nishikawa S."/>
            <person name="Nori F."/>
            <person name="Ohara O."/>
            <person name="Okazaki Y."/>
            <person name="Orlando V."/>
            <person name="Pang K.C."/>
            <person name="Pavan W.J."/>
            <person name="Pavesi G."/>
            <person name="Pesole G."/>
            <person name="Petrovsky N."/>
            <person name="Piazza S."/>
            <person name="Reed J."/>
            <person name="Reid J.F."/>
            <person name="Ring B.Z."/>
            <person name="Ringwald M."/>
            <person name="Rost B."/>
            <person name="Ruan Y."/>
            <person name="Salzberg S.L."/>
            <person name="Sandelin A."/>
            <person name="Schneider C."/>
            <person name="Schoenbach C."/>
            <person name="Sekiguchi K."/>
            <person name="Semple C.A."/>
            <person name="Seno S."/>
            <person name="Sessa L."/>
            <person name="Sheng Y."/>
            <person name="Shibata Y."/>
            <person name="Shimada H."/>
            <person name="Shimada K."/>
            <person name="Silva D."/>
            <person name="Sinclair B."/>
            <person name="Sperling S."/>
            <person name="Stupka E."/>
            <person name="Sugiura K."/>
            <person name="Sultana R."/>
            <person name="Takenaka Y."/>
            <person name="Taki K."/>
            <person name="Tammoja K."/>
            <person name="Tan S.L."/>
            <person name="Tang S."/>
            <person name="Taylor M.S."/>
            <person name="Tegner J."/>
            <person name="Teichmann S.A."/>
            <person name="Ueda H.R."/>
            <person name="van Nimwegen E."/>
            <person name="Verardo R."/>
            <person name="Wei C.L."/>
            <person name="Yagi K."/>
            <person name="Yamanishi H."/>
            <person name="Zabarovsky E."/>
            <person name="Zhu S."/>
            <person name="Zimmer A."/>
            <person name="Hide W."/>
            <person name="Bult C."/>
            <person name="Grimmond S.M."/>
            <person name="Teasdale R.D."/>
            <person name="Liu E.T."/>
            <person name="Brusic V."/>
            <person name="Quackenbush J."/>
            <person name="Wahlestedt C."/>
            <person name="Mattick J.S."/>
            <person name="Hume D.A."/>
            <person name="Kai C."/>
            <person name="Sasaki D."/>
            <person name="Tomaru Y."/>
            <person name="Fukuda S."/>
            <person name="Kanamori-Katayama M."/>
            <person name="Suzuki M."/>
            <person name="Aoki J."/>
            <person name="Arakawa T."/>
            <person name="Iida J."/>
            <person name="Imamura K."/>
            <person name="Itoh M."/>
            <person name="Kato T."/>
            <person name="Kawaji H."/>
            <person name="Kawagashira N."/>
            <person name="Kawashima T."/>
            <person name="Kojima M."/>
            <person name="Kondo S."/>
            <person name="Konno H."/>
            <person name="Nakano K."/>
            <person name="Ninomiya N."/>
            <person name="Nishio T."/>
            <person name="Okada M."/>
            <person name="Plessy C."/>
            <person name="Shibata K."/>
            <person name="Shiraki T."/>
            <person name="Suzuki S."/>
            <person name="Tagami M."/>
            <person name="Waki K."/>
            <person name="Watahiki A."/>
            <person name="Okamura-Oho Y."/>
            <person name="Suzuki H."/>
            <person name="Kawai J."/>
            <person name="Hayashizaki Y."/>
        </authorList>
    </citation>
    <scope>NUCLEOTIDE SEQUENCE [LARGE SCALE MRNA]</scope>
    <source>
        <strain>C57BL/6J</strain>
        <tissue>Head</tissue>
        <tissue>Liver</tissue>
    </source>
</reference>
<reference key="4">
    <citation type="journal article" date="2004" name="Genome Res.">
        <title>The status, quality, and expansion of the NIH full-length cDNA project: the Mammalian Gene Collection (MGC).</title>
        <authorList>
            <consortium name="The MGC Project Team"/>
        </authorList>
    </citation>
    <scope>NUCLEOTIDE SEQUENCE [LARGE SCALE MRNA]</scope>
    <source>
        <tissue>Mammary tumor</tissue>
    </source>
</reference>
<reference key="5">
    <citation type="journal article" date="1995" name="J. Biol. Chem.">
        <title>Site-directed mutagenesis of P2U purinoceptors. Positively charged amino acids in transmembrane helices 6 and 7 affect agonist potency and specificity.</title>
        <authorList>
            <person name="Erb L."/>
            <person name="Garrad R.C."/>
            <person name="Wang Y."/>
            <person name="Quinn T."/>
            <person name="Turner J.T."/>
            <person name="Weisman G.A."/>
        </authorList>
    </citation>
    <scope>MUTAGENESIS OF LYS-107; ARG-110; HIS-262; ARG-265; LYS-289 AND ARG-292</scope>
</reference>